<feature type="chain" id="PRO_0000084229" description="Retinol-binding protein 3">
    <location>
        <begin position="1"/>
        <end position="15" status="greater than"/>
    </location>
</feature>
<feature type="non-terminal residue">
    <location>
        <position position="15"/>
    </location>
</feature>
<sequence length="15" mass="1752">HPIQNLFQPSLVLDM</sequence>
<accession>P12665</accession>
<keyword id="KW-0903">Direct protein sequencing</keyword>
<keyword id="KW-0272">Extracellular matrix</keyword>
<keyword id="KW-0964">Secreted</keyword>
<keyword id="KW-0813">Transport</keyword>
<keyword id="KW-0845">Vitamin A</keyword>
<proteinExistence type="evidence at protein level"/>
<dbReference type="PIR" id="G24417">
    <property type="entry name" value="G24417"/>
</dbReference>
<dbReference type="GO" id="GO:0005576">
    <property type="term" value="C:extracellular region"/>
    <property type="evidence" value="ECO:0007669"/>
    <property type="project" value="UniProtKB-KW"/>
</dbReference>
<dbReference type="GO" id="GO:0033165">
    <property type="term" value="C:interphotoreceptor matrix"/>
    <property type="evidence" value="ECO:0007669"/>
    <property type="project" value="UniProtKB-SubCell"/>
</dbReference>
<dbReference type="GO" id="GO:0016918">
    <property type="term" value="F:retinal binding"/>
    <property type="evidence" value="ECO:0007669"/>
    <property type="project" value="UniProtKB-KW"/>
</dbReference>
<reference key="1">
    <citation type="journal article" date="1986" name="FEBS Lett.">
        <title>N-terminal sequence homologies in interstitial retinol-binding proteins from 10 vertebrate species.</title>
        <authorList>
            <person name="Fong S.-L."/>
            <person name="Cook R.G."/>
            <person name="Alvarez R.A."/>
            <person name="Liou G.I."/>
            <person name="Landers R.A."/>
            <person name="Bridges C.D.B."/>
        </authorList>
    </citation>
    <scope>PROTEIN SEQUENCE</scope>
</reference>
<gene>
    <name type="primary">RBP3</name>
</gene>
<comment type="function">
    <text>IRBP shuttles 11-cis and all trans retinoids between the retinol isomerase in the pigment epithelium and the visual pigments in the photoreceptor cells of the retina.</text>
</comment>
<comment type="subcellular location">
    <subcellularLocation>
        <location>Secreted</location>
        <location>Extracellular space</location>
        <location>Extracellular matrix</location>
        <location>Interphotoreceptor matrix</location>
    </subcellularLocation>
    <text>Interphotoreceptor matrix that permeates the space between the retina and the contiguous layer of pigment epithelium cells.</text>
</comment>
<protein>
    <recommendedName>
        <fullName>Retinol-binding protein 3</fullName>
    </recommendedName>
    <alternativeName>
        <fullName>Interphotoreceptor retinoid-binding protein</fullName>
        <shortName>IRBP</shortName>
    </alternativeName>
    <alternativeName>
        <fullName>Interstitial retinol-binding protein</fullName>
    </alternativeName>
</protein>
<organism>
    <name type="scientific">Cricetidae sp.</name>
    <name type="common">Hamster</name>
    <dbReference type="NCBI Taxonomy" id="36483"/>
    <lineage>
        <taxon>Eukaryota</taxon>
        <taxon>Metazoa</taxon>
        <taxon>Chordata</taxon>
        <taxon>Craniata</taxon>
        <taxon>Vertebrata</taxon>
        <taxon>Euteleostomi</taxon>
        <taxon>Mammalia</taxon>
        <taxon>Eutheria</taxon>
        <taxon>Euarchontoglires</taxon>
        <taxon>Glires</taxon>
        <taxon>Rodentia</taxon>
        <taxon>Myomorpha</taxon>
        <taxon>Muroidea</taxon>
        <taxon>Cricetidae</taxon>
        <taxon>Cricetinae</taxon>
    </lineage>
</organism>
<name>RET3_CRISP</name>